<organism>
    <name type="scientific">Rattus norvegicus</name>
    <name type="common">Rat</name>
    <dbReference type="NCBI Taxonomy" id="10116"/>
    <lineage>
        <taxon>Eukaryota</taxon>
        <taxon>Metazoa</taxon>
        <taxon>Chordata</taxon>
        <taxon>Craniata</taxon>
        <taxon>Vertebrata</taxon>
        <taxon>Euteleostomi</taxon>
        <taxon>Mammalia</taxon>
        <taxon>Eutheria</taxon>
        <taxon>Euarchontoglires</taxon>
        <taxon>Glires</taxon>
        <taxon>Rodentia</taxon>
        <taxon>Myomorpha</taxon>
        <taxon>Muroidea</taxon>
        <taxon>Muridae</taxon>
        <taxon>Murinae</taxon>
        <taxon>Rattus</taxon>
    </lineage>
</organism>
<keyword id="KW-0053">Apoptosis</keyword>
<keyword id="KW-0963">Cytoplasm</keyword>
<keyword id="KW-1185">Reference proteome</keyword>
<name>PRUN2_RAT</name>
<protein>
    <recommendedName>
        <fullName>Protein prune homolog 2</fullName>
    </recommendedName>
    <alternativeName>
        <fullName>BNIP2 motif-containing molecule at the C-terminal region 1</fullName>
    </alternativeName>
</protein>
<dbReference type="EMBL" id="BC091368">
    <property type="status" value="NOT_ANNOTATED_CDS"/>
    <property type="molecule type" value="mRNA"/>
</dbReference>
<dbReference type="FunCoup" id="Q5BJR4">
    <property type="interactions" value="33"/>
</dbReference>
<dbReference type="STRING" id="10116.ENSRNOP00000051678"/>
<dbReference type="jPOST" id="Q5BJR4"/>
<dbReference type="PaxDb" id="10116-ENSRNOP00000051678"/>
<dbReference type="Ensembl" id="ENSRNOT00000054794.4">
    <property type="protein sequence ID" value="ENSRNOP00000051678.2"/>
    <property type="gene ID" value="ENSRNOG00000015088.8"/>
</dbReference>
<dbReference type="UCSC" id="RGD:1311350">
    <property type="organism name" value="rat"/>
</dbReference>
<dbReference type="AGR" id="RGD:1311350"/>
<dbReference type="RGD" id="1311350">
    <property type="gene designation" value="Prune2"/>
</dbReference>
<dbReference type="eggNOG" id="KOG4129">
    <property type="taxonomic scope" value="Eukaryota"/>
</dbReference>
<dbReference type="GeneTree" id="ENSGT00940000154422"/>
<dbReference type="HOGENOM" id="CLU_039135_3_0_1"/>
<dbReference type="InParanoid" id="Q5BJR4"/>
<dbReference type="PRO" id="PR:Q5BJR4"/>
<dbReference type="Proteomes" id="UP000002494">
    <property type="component" value="Chromosome 1"/>
</dbReference>
<dbReference type="Bgee" id="ENSRNOG00000015088">
    <property type="expression patterns" value="Expressed in cerebellum and 19 other cell types or tissues"/>
</dbReference>
<dbReference type="GO" id="GO:0005737">
    <property type="term" value="C:cytoplasm"/>
    <property type="evidence" value="ECO:0007669"/>
    <property type="project" value="UniProtKB-SubCell"/>
</dbReference>
<dbReference type="GO" id="GO:0098978">
    <property type="term" value="C:glutamatergic synapse"/>
    <property type="evidence" value="ECO:0000266"/>
    <property type="project" value="RGD"/>
</dbReference>
<dbReference type="GO" id="GO:0098793">
    <property type="term" value="C:presynapse"/>
    <property type="evidence" value="ECO:0000266"/>
    <property type="project" value="RGD"/>
</dbReference>
<dbReference type="GO" id="GO:0006915">
    <property type="term" value="P:apoptotic process"/>
    <property type="evidence" value="ECO:0007669"/>
    <property type="project" value="UniProtKB-KW"/>
</dbReference>
<dbReference type="CDD" id="cd00170">
    <property type="entry name" value="SEC14"/>
    <property type="match status" value="1"/>
</dbReference>
<dbReference type="FunFam" id="3.40.525.10:FF:000001">
    <property type="entry name" value="BCL2/adenovirus E1B protein-interacting protein 2"/>
    <property type="match status" value="1"/>
</dbReference>
<dbReference type="Gene3D" id="3.40.525.10">
    <property type="entry name" value="CRAL-TRIO lipid binding domain"/>
    <property type="match status" value="1"/>
</dbReference>
<dbReference type="InterPro" id="IPR022181">
    <property type="entry name" value="Bcl2-/adenovirus-E1B"/>
</dbReference>
<dbReference type="InterPro" id="IPR001251">
    <property type="entry name" value="CRAL-TRIO_dom"/>
</dbReference>
<dbReference type="InterPro" id="IPR036865">
    <property type="entry name" value="CRAL-TRIO_dom_sf"/>
</dbReference>
<dbReference type="PANTHER" id="PTHR12112">
    <property type="entry name" value="BNIP - RELATED"/>
    <property type="match status" value="1"/>
</dbReference>
<dbReference type="PANTHER" id="PTHR12112:SF11">
    <property type="entry name" value="PROTEIN PRUNE HOMOLOG 2"/>
    <property type="match status" value="1"/>
</dbReference>
<dbReference type="Pfam" id="PF12496">
    <property type="entry name" value="BNIP2"/>
    <property type="match status" value="1"/>
</dbReference>
<dbReference type="Pfam" id="PF13716">
    <property type="entry name" value="CRAL_TRIO_2"/>
    <property type="match status" value="1"/>
</dbReference>
<dbReference type="SMART" id="SM00516">
    <property type="entry name" value="SEC14"/>
    <property type="match status" value="1"/>
</dbReference>
<dbReference type="SUPFAM" id="SSF52087">
    <property type="entry name" value="CRAL/TRIO domain"/>
    <property type="match status" value="1"/>
</dbReference>
<dbReference type="PROSITE" id="PS50191">
    <property type="entry name" value="CRAL_TRIO"/>
    <property type="match status" value="1"/>
</dbReference>
<reference key="1">
    <citation type="journal article" date="2004" name="Genome Res.">
        <title>The status, quality, and expansion of the NIH full-length cDNA project: the Mammalian Gene Collection (MGC).</title>
        <authorList>
            <consortium name="The MGC Project Team"/>
        </authorList>
    </citation>
    <scope>NUCLEOTIDE SEQUENCE [LARGE SCALE MRNA]</scope>
    <source>
        <tissue>Brain</tissue>
    </source>
</reference>
<reference key="2">
    <citation type="journal article" date="2012" name="Nat. Commun.">
        <title>Quantitative maps of protein phosphorylation sites across 14 different rat organs and tissues.</title>
        <authorList>
            <person name="Lundby A."/>
            <person name="Secher A."/>
            <person name="Lage K."/>
            <person name="Nordsborg N.B."/>
            <person name="Dmytriyev A."/>
            <person name="Lundby C."/>
            <person name="Olsen J.V."/>
        </authorList>
    </citation>
    <scope>IDENTIFICATION BY MASS SPECTROMETRY [LARGE SCALE ANALYSIS]</scope>
</reference>
<accession>Q5BJR4</accession>
<proteinExistence type="evidence at protein level"/>
<feature type="chain" id="PRO_0000274883" description="Protein prune homolog 2">
    <location>
        <begin position="1"/>
        <end position="322"/>
    </location>
</feature>
<feature type="domain" description="CRAL-TRIO" evidence="2">
    <location>
        <begin position="130"/>
        <end position="291"/>
    </location>
</feature>
<feature type="region of interest" description="Disordered" evidence="3">
    <location>
        <begin position="1"/>
        <end position="110"/>
    </location>
</feature>
<feature type="compositionally biased region" description="Polar residues" evidence="3">
    <location>
        <begin position="40"/>
        <end position="52"/>
    </location>
</feature>
<feature type="compositionally biased region" description="Acidic residues" evidence="3">
    <location>
        <begin position="57"/>
        <end position="80"/>
    </location>
</feature>
<gene>
    <name type="primary">Prune2</name>
    <name type="synonym">Bmcc1</name>
</gene>
<comment type="function">
    <text evidence="1">May play an important role in regulating differentiation, survival and aggressiveness of the tumor cells.</text>
</comment>
<comment type="subcellular location">
    <subcellularLocation>
        <location evidence="1">Cytoplasm</location>
    </subcellularLocation>
</comment>
<evidence type="ECO:0000250" key="1"/>
<evidence type="ECO:0000255" key="2">
    <source>
        <dbReference type="PROSITE-ProRule" id="PRU00056"/>
    </source>
</evidence>
<evidence type="ECO:0000256" key="3">
    <source>
        <dbReference type="SAM" id="MobiDB-lite"/>
    </source>
</evidence>
<sequence length="322" mass="36980">MDIHFEEGVLSPSATDMRPEPPNSLDLNGSHPRRIKLTAPNINLSLDQSEGSILSDDNLDSPDEIDINVDELDTPDEADSFEYPGHEDPMANRSSGQESESIPEYTAEEEREDNRLWRTVVIGEQEQRIDMKVIEPYRRVISHGGYYGDGLNAIIVFAACFLPDSSRADYHYVMENLFLYVISTLELMVAEDYMIVYLNGATPRRKMPGLGWMKKCYQMIDRRLRKNLKSFIIVHPSWFIRTILAVTRPFISSKFSSKIKYVSSLSELSGLIPMDCIHIPESIIKYDEEKSFKRSVRTSCLYNDPEMTSMEKDIDMKLKEKP</sequence>